<reference key="1">
    <citation type="submission" date="2006-08" db="EMBL/GenBank/DDBJ databases">
        <title>Complete sequence of chromosome 1 of Burkholderia cepacia AMMD.</title>
        <authorList>
            <person name="Copeland A."/>
            <person name="Lucas S."/>
            <person name="Lapidus A."/>
            <person name="Barry K."/>
            <person name="Detter J.C."/>
            <person name="Glavina del Rio T."/>
            <person name="Hammon N."/>
            <person name="Israni S."/>
            <person name="Pitluck S."/>
            <person name="Bruce D."/>
            <person name="Chain P."/>
            <person name="Malfatti S."/>
            <person name="Shin M."/>
            <person name="Vergez L."/>
            <person name="Schmutz J."/>
            <person name="Larimer F."/>
            <person name="Land M."/>
            <person name="Hauser L."/>
            <person name="Kyrpides N."/>
            <person name="Kim E."/>
            <person name="Parke J."/>
            <person name="Coenye T."/>
            <person name="Konstantinidis K."/>
            <person name="Ramette A."/>
            <person name="Tiedje J."/>
            <person name="Richardson P."/>
        </authorList>
    </citation>
    <scope>NUCLEOTIDE SEQUENCE [LARGE SCALE GENOMIC DNA]</scope>
    <source>
        <strain>ATCC BAA-244 / DSM 16087 / CCUG 44356 / LMG 19182 / AMMD</strain>
    </source>
</reference>
<comment type="function">
    <text evidence="1">ATP-dependent specificity component of the Clp protease. It directs the protease to specific substrates. Can perform chaperone functions in the absence of ClpP.</text>
</comment>
<comment type="subunit">
    <text evidence="1">Component of the ClpX-ClpP complex. Forms a hexameric ring that, in the presence of ATP, binds to fourteen ClpP subunits assembled into a disk-like structure with a central cavity, resembling the structure of eukaryotic proteasomes.</text>
</comment>
<comment type="similarity">
    <text evidence="1">Belongs to the ClpX chaperone family.</text>
</comment>
<name>CLPX_BURCM</name>
<organism>
    <name type="scientific">Burkholderia ambifaria (strain ATCC BAA-244 / DSM 16087 / CCUG 44356 / LMG 19182 / AMMD)</name>
    <name type="common">Burkholderia cepacia (strain AMMD)</name>
    <dbReference type="NCBI Taxonomy" id="339670"/>
    <lineage>
        <taxon>Bacteria</taxon>
        <taxon>Pseudomonadati</taxon>
        <taxon>Pseudomonadota</taxon>
        <taxon>Betaproteobacteria</taxon>
        <taxon>Burkholderiales</taxon>
        <taxon>Burkholderiaceae</taxon>
        <taxon>Burkholderia</taxon>
        <taxon>Burkholderia cepacia complex</taxon>
    </lineage>
</organism>
<evidence type="ECO:0000255" key="1">
    <source>
        <dbReference type="HAMAP-Rule" id="MF_00175"/>
    </source>
</evidence>
<evidence type="ECO:0000255" key="2">
    <source>
        <dbReference type="PROSITE-ProRule" id="PRU01250"/>
    </source>
</evidence>
<gene>
    <name evidence="1" type="primary">clpX</name>
    <name type="ordered locus">Bamb_1910</name>
</gene>
<feature type="chain" id="PRO_1000024527" description="ATP-dependent Clp protease ATP-binding subunit ClpX">
    <location>
        <begin position="1"/>
        <end position="423"/>
    </location>
</feature>
<feature type="domain" description="ClpX-type ZB" evidence="2">
    <location>
        <begin position="3"/>
        <end position="56"/>
    </location>
</feature>
<feature type="binding site" evidence="2">
    <location>
        <position position="15"/>
    </location>
    <ligand>
        <name>Zn(2+)</name>
        <dbReference type="ChEBI" id="CHEBI:29105"/>
    </ligand>
</feature>
<feature type="binding site" evidence="2">
    <location>
        <position position="18"/>
    </location>
    <ligand>
        <name>Zn(2+)</name>
        <dbReference type="ChEBI" id="CHEBI:29105"/>
    </ligand>
</feature>
<feature type="binding site" evidence="2">
    <location>
        <position position="37"/>
    </location>
    <ligand>
        <name>Zn(2+)</name>
        <dbReference type="ChEBI" id="CHEBI:29105"/>
    </ligand>
</feature>
<feature type="binding site" evidence="2">
    <location>
        <position position="40"/>
    </location>
    <ligand>
        <name>Zn(2+)</name>
        <dbReference type="ChEBI" id="CHEBI:29105"/>
    </ligand>
</feature>
<feature type="binding site" evidence="1">
    <location>
        <begin position="122"/>
        <end position="129"/>
    </location>
    <ligand>
        <name>ATP</name>
        <dbReference type="ChEBI" id="CHEBI:30616"/>
    </ligand>
</feature>
<dbReference type="EMBL" id="CP000440">
    <property type="protein sequence ID" value="ABI87466.1"/>
    <property type="molecule type" value="Genomic_DNA"/>
</dbReference>
<dbReference type="RefSeq" id="WP_006754177.1">
    <property type="nucleotide sequence ID" value="NZ_CP009798.1"/>
</dbReference>
<dbReference type="SMR" id="Q0BEF7"/>
<dbReference type="GeneID" id="93085887"/>
<dbReference type="KEGG" id="bam:Bamb_1910"/>
<dbReference type="PATRIC" id="fig|339670.21.peg.3041"/>
<dbReference type="eggNOG" id="COG1219">
    <property type="taxonomic scope" value="Bacteria"/>
</dbReference>
<dbReference type="Proteomes" id="UP000000662">
    <property type="component" value="Chromosome 1"/>
</dbReference>
<dbReference type="GO" id="GO:0009376">
    <property type="term" value="C:HslUV protease complex"/>
    <property type="evidence" value="ECO:0007669"/>
    <property type="project" value="TreeGrafter"/>
</dbReference>
<dbReference type="GO" id="GO:0005524">
    <property type="term" value="F:ATP binding"/>
    <property type="evidence" value="ECO:0007669"/>
    <property type="project" value="UniProtKB-UniRule"/>
</dbReference>
<dbReference type="GO" id="GO:0016887">
    <property type="term" value="F:ATP hydrolysis activity"/>
    <property type="evidence" value="ECO:0007669"/>
    <property type="project" value="InterPro"/>
</dbReference>
<dbReference type="GO" id="GO:0140662">
    <property type="term" value="F:ATP-dependent protein folding chaperone"/>
    <property type="evidence" value="ECO:0007669"/>
    <property type="project" value="InterPro"/>
</dbReference>
<dbReference type="GO" id="GO:0046983">
    <property type="term" value="F:protein dimerization activity"/>
    <property type="evidence" value="ECO:0007669"/>
    <property type="project" value="InterPro"/>
</dbReference>
<dbReference type="GO" id="GO:0051082">
    <property type="term" value="F:unfolded protein binding"/>
    <property type="evidence" value="ECO:0007669"/>
    <property type="project" value="UniProtKB-UniRule"/>
</dbReference>
<dbReference type="GO" id="GO:0008270">
    <property type="term" value="F:zinc ion binding"/>
    <property type="evidence" value="ECO:0007669"/>
    <property type="project" value="InterPro"/>
</dbReference>
<dbReference type="GO" id="GO:0051301">
    <property type="term" value="P:cell division"/>
    <property type="evidence" value="ECO:0007669"/>
    <property type="project" value="TreeGrafter"/>
</dbReference>
<dbReference type="GO" id="GO:0051603">
    <property type="term" value="P:proteolysis involved in protein catabolic process"/>
    <property type="evidence" value="ECO:0007669"/>
    <property type="project" value="TreeGrafter"/>
</dbReference>
<dbReference type="CDD" id="cd19497">
    <property type="entry name" value="RecA-like_ClpX"/>
    <property type="match status" value="1"/>
</dbReference>
<dbReference type="FunFam" id="1.10.8.60:FF:000002">
    <property type="entry name" value="ATP-dependent Clp protease ATP-binding subunit ClpX"/>
    <property type="match status" value="1"/>
</dbReference>
<dbReference type="FunFam" id="3.40.50.300:FF:000005">
    <property type="entry name" value="ATP-dependent Clp protease ATP-binding subunit ClpX"/>
    <property type="match status" value="1"/>
</dbReference>
<dbReference type="Gene3D" id="1.10.8.60">
    <property type="match status" value="1"/>
</dbReference>
<dbReference type="Gene3D" id="6.20.220.10">
    <property type="entry name" value="ClpX chaperone, C4-type zinc finger domain"/>
    <property type="match status" value="1"/>
</dbReference>
<dbReference type="Gene3D" id="3.40.50.300">
    <property type="entry name" value="P-loop containing nucleotide triphosphate hydrolases"/>
    <property type="match status" value="1"/>
</dbReference>
<dbReference type="HAMAP" id="MF_00175">
    <property type="entry name" value="ClpX"/>
    <property type="match status" value="1"/>
</dbReference>
<dbReference type="InterPro" id="IPR003593">
    <property type="entry name" value="AAA+_ATPase"/>
</dbReference>
<dbReference type="InterPro" id="IPR050052">
    <property type="entry name" value="ATP-dep_Clp_protease_ClpX"/>
</dbReference>
<dbReference type="InterPro" id="IPR003959">
    <property type="entry name" value="ATPase_AAA_core"/>
</dbReference>
<dbReference type="InterPro" id="IPR019489">
    <property type="entry name" value="Clp_ATPase_C"/>
</dbReference>
<dbReference type="InterPro" id="IPR004487">
    <property type="entry name" value="Clp_protease_ATP-bd_su_ClpX"/>
</dbReference>
<dbReference type="InterPro" id="IPR046425">
    <property type="entry name" value="ClpX_bact"/>
</dbReference>
<dbReference type="InterPro" id="IPR027417">
    <property type="entry name" value="P-loop_NTPase"/>
</dbReference>
<dbReference type="InterPro" id="IPR010603">
    <property type="entry name" value="Znf_CppX_C4"/>
</dbReference>
<dbReference type="InterPro" id="IPR038366">
    <property type="entry name" value="Znf_CppX_C4_sf"/>
</dbReference>
<dbReference type="NCBIfam" id="TIGR00382">
    <property type="entry name" value="clpX"/>
    <property type="match status" value="1"/>
</dbReference>
<dbReference type="NCBIfam" id="NF003745">
    <property type="entry name" value="PRK05342.1"/>
    <property type="match status" value="1"/>
</dbReference>
<dbReference type="PANTHER" id="PTHR48102:SF7">
    <property type="entry name" value="ATP-DEPENDENT CLP PROTEASE ATP-BINDING SUBUNIT CLPX-LIKE, MITOCHONDRIAL"/>
    <property type="match status" value="1"/>
</dbReference>
<dbReference type="PANTHER" id="PTHR48102">
    <property type="entry name" value="ATP-DEPENDENT CLP PROTEASE ATP-BINDING SUBUNIT CLPX-LIKE, MITOCHONDRIAL-RELATED"/>
    <property type="match status" value="1"/>
</dbReference>
<dbReference type="Pfam" id="PF07724">
    <property type="entry name" value="AAA_2"/>
    <property type="match status" value="1"/>
</dbReference>
<dbReference type="Pfam" id="PF10431">
    <property type="entry name" value="ClpB_D2-small"/>
    <property type="match status" value="1"/>
</dbReference>
<dbReference type="Pfam" id="PF06689">
    <property type="entry name" value="zf-C4_ClpX"/>
    <property type="match status" value="1"/>
</dbReference>
<dbReference type="SMART" id="SM00382">
    <property type="entry name" value="AAA"/>
    <property type="match status" value="1"/>
</dbReference>
<dbReference type="SMART" id="SM01086">
    <property type="entry name" value="ClpB_D2-small"/>
    <property type="match status" value="1"/>
</dbReference>
<dbReference type="SMART" id="SM00994">
    <property type="entry name" value="zf-C4_ClpX"/>
    <property type="match status" value="1"/>
</dbReference>
<dbReference type="SUPFAM" id="SSF57716">
    <property type="entry name" value="Glucocorticoid receptor-like (DNA-binding domain)"/>
    <property type="match status" value="1"/>
</dbReference>
<dbReference type="SUPFAM" id="SSF52540">
    <property type="entry name" value="P-loop containing nucleoside triphosphate hydrolases"/>
    <property type="match status" value="1"/>
</dbReference>
<dbReference type="PROSITE" id="PS51902">
    <property type="entry name" value="CLPX_ZB"/>
    <property type="match status" value="1"/>
</dbReference>
<accession>Q0BEF7</accession>
<sequence length="423" mass="46375">MADKKGSNSEKLLYCSFCGKSQHEVKKLIAGPSVFICDECIDLCNEIIRDEAAAAGVEASLSRSDLPSPQEIRDILDQYVIGQERAKKILAVAVYNHYKRLKHLDKKDDVELSKSNILLIGPTGSGKTLLAQTLARLLNVPFVIADATTLTEAGYVGEDVENIIQKLLQNCNYEVDKAQRGIVYIDEIDKISRKSDNPSITRDVSGEGVQQALLKLVEGTMASVPPQGGRKHPNQDFIQVDTTNILFICGGAFDGLEKVITDRTEKTGIGFGATVKSKQERDAGEVLRETEPEDLIKFGLIPELIGRLPVVATLGKLDEAALMKILVEPKNALVKQYHKLFAMERVELEIRPGALQAVARKAIRRKTGARGLRSIIEQALLDVMYELPAMKGVSKVIIDENVIDGDGKPLLIYEDTPKVAGSN</sequence>
<keyword id="KW-0067">ATP-binding</keyword>
<keyword id="KW-0143">Chaperone</keyword>
<keyword id="KW-0479">Metal-binding</keyword>
<keyword id="KW-0547">Nucleotide-binding</keyword>
<keyword id="KW-0862">Zinc</keyword>
<proteinExistence type="inferred from homology"/>
<protein>
    <recommendedName>
        <fullName evidence="1">ATP-dependent Clp protease ATP-binding subunit ClpX</fullName>
    </recommendedName>
</protein>